<protein>
    <recommendedName>
        <fullName evidence="1">Sulfite reductase [NADPH] hemoprotein beta-component</fullName>
        <shortName evidence="1">SiR-HP</shortName>
        <shortName evidence="1">SiRHP</shortName>
        <ecNumber evidence="1">1.8.1.2</ecNumber>
    </recommendedName>
</protein>
<reference key="1">
    <citation type="submission" date="2006-09" db="EMBL/GenBank/DDBJ databases">
        <title>Complete sequence of chromosome 1 of Shewanella sp. ANA-3.</title>
        <authorList>
            <person name="Copeland A."/>
            <person name="Lucas S."/>
            <person name="Lapidus A."/>
            <person name="Barry K."/>
            <person name="Detter J.C."/>
            <person name="Glavina del Rio T."/>
            <person name="Hammon N."/>
            <person name="Israni S."/>
            <person name="Dalin E."/>
            <person name="Tice H."/>
            <person name="Pitluck S."/>
            <person name="Chertkov O."/>
            <person name="Brettin T."/>
            <person name="Bruce D."/>
            <person name="Han C."/>
            <person name="Tapia R."/>
            <person name="Gilna P."/>
            <person name="Schmutz J."/>
            <person name="Larimer F."/>
            <person name="Land M."/>
            <person name="Hauser L."/>
            <person name="Kyrpides N."/>
            <person name="Kim E."/>
            <person name="Newman D."/>
            <person name="Salticov C."/>
            <person name="Konstantinidis K."/>
            <person name="Klappenback J."/>
            <person name="Tiedje J."/>
            <person name="Richardson P."/>
        </authorList>
    </citation>
    <scope>NUCLEOTIDE SEQUENCE [LARGE SCALE GENOMIC DNA]</scope>
    <source>
        <strain>ANA-3</strain>
    </source>
</reference>
<gene>
    <name evidence="1" type="primary">cysI</name>
    <name type="ordered locus">Shewana3_0856</name>
</gene>
<organism>
    <name type="scientific">Shewanella sp. (strain ANA-3)</name>
    <dbReference type="NCBI Taxonomy" id="94122"/>
    <lineage>
        <taxon>Bacteria</taxon>
        <taxon>Pseudomonadati</taxon>
        <taxon>Pseudomonadota</taxon>
        <taxon>Gammaproteobacteria</taxon>
        <taxon>Alteromonadales</taxon>
        <taxon>Shewanellaceae</taxon>
        <taxon>Shewanella</taxon>
    </lineage>
</organism>
<accession>A0KTH5</accession>
<sequence length="565" mass="62971">MSEQKLALNEYLKTDSDYLRGTIKEGLDSSVTGSFSDGDQQLIKFHGFYQQDDRDLRNERKEQKLEPLYSFMLRARVPGGVCTPKQWLGVDEIASTLTSSNSIRLTTRQTFQYHGIPKRNLKTIIQGLDREALDSIAACGDVNRNVMCNPNPVESKLHAQAYEVAKKLSDHLLPHTRAYAEIWLDEEKLLTTEDETVEPVYGKTYLPRKFKMAVAVPPDNDVDVYTNDLGFIAVAENGELVGFNLTAGGGMGSTHGEVETFPRLADDFGFIKTEDVMKFAEAVMTVQRDWGNRTNRKRSRLKYTIVDHGYEKFKAEVEARAGVKFEPKRDVVIGDRGDRYGWVEGVDGKWHLTLFIESGRIKDVPGKSLQTGMREIAKIHKGDFRMTSNQNMIIAGVAPEDKATIEGLARKHGLLGQVLTQTRGHSIACVALPTCPLAMAEAERYFPEFIDHIDALQAKNGISDQAIVVRMTGCPNGCARPFAAEIGLVGKAPGRYNLYLGANFEGTRLNKMYRENIQEAEILAELDALFARYAVERNAGETFGNFTVRTGVVKAVIDAAKDFHG</sequence>
<dbReference type="EC" id="1.8.1.2" evidence="1"/>
<dbReference type="EMBL" id="CP000469">
    <property type="protein sequence ID" value="ABK47094.1"/>
    <property type="molecule type" value="Genomic_DNA"/>
</dbReference>
<dbReference type="RefSeq" id="WP_011625339.1">
    <property type="nucleotide sequence ID" value="NC_008577.1"/>
</dbReference>
<dbReference type="SMR" id="A0KTH5"/>
<dbReference type="STRING" id="94122.Shewana3_0856"/>
<dbReference type="GeneID" id="94726837"/>
<dbReference type="KEGG" id="shn:Shewana3_0856"/>
<dbReference type="eggNOG" id="COG0155">
    <property type="taxonomic scope" value="Bacteria"/>
</dbReference>
<dbReference type="HOGENOM" id="CLU_001975_3_2_6"/>
<dbReference type="OrthoDB" id="3189055at2"/>
<dbReference type="UniPathway" id="UPA00140">
    <property type="reaction ID" value="UER00207"/>
</dbReference>
<dbReference type="Proteomes" id="UP000002589">
    <property type="component" value="Chromosome"/>
</dbReference>
<dbReference type="GO" id="GO:0009337">
    <property type="term" value="C:sulfite reductase complex (NADPH)"/>
    <property type="evidence" value="ECO:0007669"/>
    <property type="project" value="InterPro"/>
</dbReference>
<dbReference type="GO" id="GO:0051539">
    <property type="term" value="F:4 iron, 4 sulfur cluster binding"/>
    <property type="evidence" value="ECO:0007669"/>
    <property type="project" value="UniProtKB-KW"/>
</dbReference>
<dbReference type="GO" id="GO:0020037">
    <property type="term" value="F:heme binding"/>
    <property type="evidence" value="ECO:0007669"/>
    <property type="project" value="InterPro"/>
</dbReference>
<dbReference type="GO" id="GO:0046872">
    <property type="term" value="F:metal ion binding"/>
    <property type="evidence" value="ECO:0007669"/>
    <property type="project" value="UniProtKB-KW"/>
</dbReference>
<dbReference type="GO" id="GO:0050661">
    <property type="term" value="F:NADP binding"/>
    <property type="evidence" value="ECO:0007669"/>
    <property type="project" value="InterPro"/>
</dbReference>
<dbReference type="GO" id="GO:0050311">
    <property type="term" value="F:sulfite reductase (ferredoxin) activity"/>
    <property type="evidence" value="ECO:0007669"/>
    <property type="project" value="TreeGrafter"/>
</dbReference>
<dbReference type="GO" id="GO:0004783">
    <property type="term" value="F:sulfite reductase (NADPH) activity"/>
    <property type="evidence" value="ECO:0007669"/>
    <property type="project" value="UniProtKB-UniRule"/>
</dbReference>
<dbReference type="GO" id="GO:0019344">
    <property type="term" value="P:cysteine biosynthetic process"/>
    <property type="evidence" value="ECO:0007669"/>
    <property type="project" value="UniProtKB-KW"/>
</dbReference>
<dbReference type="GO" id="GO:0070814">
    <property type="term" value="P:hydrogen sulfide biosynthetic process"/>
    <property type="evidence" value="ECO:0007669"/>
    <property type="project" value="UniProtKB-UniRule"/>
</dbReference>
<dbReference type="GO" id="GO:0000103">
    <property type="term" value="P:sulfate assimilation"/>
    <property type="evidence" value="ECO:0007669"/>
    <property type="project" value="UniProtKB-UniRule"/>
</dbReference>
<dbReference type="FunFam" id="3.30.413.10:FF:000003">
    <property type="entry name" value="Sulfite reductase [NADPH] hemoprotein beta-component"/>
    <property type="match status" value="1"/>
</dbReference>
<dbReference type="FunFam" id="3.30.413.10:FF:000004">
    <property type="entry name" value="Sulfite reductase [NADPH] hemoprotein beta-component"/>
    <property type="match status" value="1"/>
</dbReference>
<dbReference type="Gene3D" id="3.30.413.10">
    <property type="entry name" value="Sulfite Reductase Hemoprotein, domain 1"/>
    <property type="match status" value="2"/>
</dbReference>
<dbReference type="HAMAP" id="MF_01540">
    <property type="entry name" value="CysI"/>
    <property type="match status" value="1"/>
</dbReference>
<dbReference type="InterPro" id="IPR011786">
    <property type="entry name" value="CysI"/>
</dbReference>
<dbReference type="InterPro" id="IPR005117">
    <property type="entry name" value="NiRdtase/SiRdtase_haem-b_fer"/>
</dbReference>
<dbReference type="InterPro" id="IPR036136">
    <property type="entry name" value="Nit/Sulf_reduc_fer-like_dom_sf"/>
</dbReference>
<dbReference type="InterPro" id="IPR006067">
    <property type="entry name" value="NO2/SO3_Rdtase_4Fe4S_dom"/>
</dbReference>
<dbReference type="InterPro" id="IPR045169">
    <property type="entry name" value="NO2/SO3_Rdtase_4Fe4S_prot"/>
</dbReference>
<dbReference type="InterPro" id="IPR045854">
    <property type="entry name" value="NO2/SO3_Rdtase_4Fe4S_sf"/>
</dbReference>
<dbReference type="InterPro" id="IPR006066">
    <property type="entry name" value="NO2/SO3_Rdtase_FeS/sirohaem_BS"/>
</dbReference>
<dbReference type="NCBIfam" id="TIGR02041">
    <property type="entry name" value="CysI"/>
    <property type="match status" value="1"/>
</dbReference>
<dbReference type="NCBIfam" id="NF010029">
    <property type="entry name" value="PRK13504.1"/>
    <property type="match status" value="1"/>
</dbReference>
<dbReference type="PANTHER" id="PTHR11493:SF47">
    <property type="entry name" value="SULFITE REDUCTASE [NADPH] SUBUNIT BETA"/>
    <property type="match status" value="1"/>
</dbReference>
<dbReference type="PANTHER" id="PTHR11493">
    <property type="entry name" value="SULFITE REDUCTASE [NADPH] SUBUNIT BETA-RELATED"/>
    <property type="match status" value="1"/>
</dbReference>
<dbReference type="Pfam" id="PF01077">
    <property type="entry name" value="NIR_SIR"/>
    <property type="match status" value="1"/>
</dbReference>
<dbReference type="Pfam" id="PF03460">
    <property type="entry name" value="NIR_SIR_ferr"/>
    <property type="match status" value="2"/>
</dbReference>
<dbReference type="PRINTS" id="PR00397">
    <property type="entry name" value="SIROHAEM"/>
</dbReference>
<dbReference type="SUPFAM" id="SSF56014">
    <property type="entry name" value="Nitrite and sulphite reductase 4Fe-4S domain-like"/>
    <property type="match status" value="2"/>
</dbReference>
<dbReference type="SUPFAM" id="SSF55124">
    <property type="entry name" value="Nitrite/Sulfite reductase N-terminal domain-like"/>
    <property type="match status" value="2"/>
</dbReference>
<dbReference type="PROSITE" id="PS00365">
    <property type="entry name" value="NIR_SIR"/>
    <property type="match status" value="1"/>
</dbReference>
<comment type="function">
    <text evidence="1">Component of the sulfite reductase complex that catalyzes the 6-electron reduction of sulfite to sulfide. This is one of several activities required for the biosynthesis of L-cysteine from sulfate.</text>
</comment>
<comment type="catalytic activity">
    <reaction evidence="1">
        <text>hydrogen sulfide + 3 NADP(+) + 3 H2O = sulfite + 3 NADPH + 4 H(+)</text>
        <dbReference type="Rhea" id="RHEA:13801"/>
        <dbReference type="ChEBI" id="CHEBI:15377"/>
        <dbReference type="ChEBI" id="CHEBI:15378"/>
        <dbReference type="ChEBI" id="CHEBI:17359"/>
        <dbReference type="ChEBI" id="CHEBI:29919"/>
        <dbReference type="ChEBI" id="CHEBI:57783"/>
        <dbReference type="ChEBI" id="CHEBI:58349"/>
        <dbReference type="EC" id="1.8.1.2"/>
    </reaction>
</comment>
<comment type="cofactor">
    <cofactor evidence="1">
        <name>siroheme</name>
        <dbReference type="ChEBI" id="CHEBI:60052"/>
    </cofactor>
    <text evidence="1">Binds 1 siroheme per subunit.</text>
</comment>
<comment type="cofactor">
    <cofactor evidence="1">
        <name>[4Fe-4S] cluster</name>
        <dbReference type="ChEBI" id="CHEBI:49883"/>
    </cofactor>
    <text evidence="1">Binds 1 [4Fe-4S] cluster per subunit.</text>
</comment>
<comment type="pathway">
    <text evidence="1">Sulfur metabolism; hydrogen sulfide biosynthesis; hydrogen sulfide from sulfite (NADPH route): step 1/1.</text>
</comment>
<comment type="subunit">
    <text evidence="1">Alpha(8)-beta(8). The alpha component is a flavoprotein, the beta component is a hemoprotein.</text>
</comment>
<comment type="similarity">
    <text evidence="1">Belongs to the nitrite and sulfite reductase 4Fe-4S domain family.</text>
</comment>
<keyword id="KW-0004">4Fe-4S</keyword>
<keyword id="KW-0028">Amino-acid biosynthesis</keyword>
<keyword id="KW-0198">Cysteine biosynthesis</keyword>
<keyword id="KW-0349">Heme</keyword>
<keyword id="KW-0408">Iron</keyword>
<keyword id="KW-0411">Iron-sulfur</keyword>
<keyword id="KW-0479">Metal-binding</keyword>
<keyword id="KW-0521">NADP</keyword>
<keyword id="KW-0560">Oxidoreductase</keyword>
<name>CYSI_SHESA</name>
<proteinExistence type="inferred from homology"/>
<feature type="chain" id="PRO_1000068771" description="Sulfite reductase [NADPH] hemoprotein beta-component">
    <location>
        <begin position="1"/>
        <end position="565"/>
    </location>
</feature>
<feature type="binding site" evidence="1">
    <location>
        <position position="429"/>
    </location>
    <ligand>
        <name>[4Fe-4S] cluster</name>
        <dbReference type="ChEBI" id="CHEBI:49883"/>
    </ligand>
</feature>
<feature type="binding site" evidence="1">
    <location>
        <position position="435"/>
    </location>
    <ligand>
        <name>[4Fe-4S] cluster</name>
        <dbReference type="ChEBI" id="CHEBI:49883"/>
    </ligand>
</feature>
<feature type="binding site" evidence="1">
    <location>
        <position position="474"/>
    </location>
    <ligand>
        <name>[4Fe-4S] cluster</name>
        <dbReference type="ChEBI" id="CHEBI:49883"/>
    </ligand>
</feature>
<feature type="binding site" evidence="1">
    <location>
        <position position="478"/>
    </location>
    <ligand>
        <name>[4Fe-4S] cluster</name>
        <dbReference type="ChEBI" id="CHEBI:49883"/>
    </ligand>
</feature>
<feature type="binding site" description="axial binding residue" evidence="1">
    <location>
        <position position="478"/>
    </location>
    <ligand>
        <name>siroheme</name>
        <dbReference type="ChEBI" id="CHEBI:60052"/>
    </ligand>
    <ligandPart>
        <name>Fe</name>
        <dbReference type="ChEBI" id="CHEBI:18248"/>
    </ligandPart>
</feature>
<evidence type="ECO:0000255" key="1">
    <source>
        <dbReference type="HAMAP-Rule" id="MF_01540"/>
    </source>
</evidence>